<comment type="function">
    <molecule>Isoform c</molecule>
    <text evidence="6">Regulates mesendoderm formation and the establishment of left-right asymmetry in the developing embryo.</text>
</comment>
<comment type="function">
    <molecule>Isoform a</molecule>
    <text evidence="6">Regulates mesendoderm formation and the establishment of left-right asymmetry in the developing embryo, with a particularly strong effect on heart laterality.</text>
</comment>
<comment type="subcellular location">
    <subcellularLocation>
        <location evidence="10">Nucleus</location>
    </subcellularLocation>
    <subcellularLocation>
        <location evidence="1">Cytoplasm</location>
    </subcellularLocation>
</comment>
<comment type="alternative products">
    <event type="alternative splicing"/>
    <isoform>
        <id>Q9W5Z2-1</id>
        <name>c</name>
        <name>Pitx2c</name>
        <sequence type="displayed"/>
    </isoform>
    <isoform>
        <id>Q9W5Z2-2</id>
        <name>a</name>
        <name>Pitx2a</name>
        <sequence type="described" ref="VSP_002268 VSP_002269"/>
    </isoform>
</comment>
<comment type="developmental stage">
    <molecule>Isoform c</molecule>
    <text evidence="6">Expressed symmetrically in presumptive mesendoderm during late blastula stages, and in both the anterior (polster) and posterior prechordal plate during late gastrulation. At 4- to 6-somite stages, expressed in the polster, and weak expression remains in the posterior prechordal plate. Also expressed in different asymmetric domains during development of the diencephalon, gut and heart; restricted to the dorsal diencephalon and left hand side of the developing gut.</text>
</comment>
<comment type="developmental stage">
    <molecule>Isoform a</molecule>
    <text evidence="6">Expression begins at bud stage (late gastrula), in the anterior prechordal plate (polster). At 4- to 6-somite stages, expressed in the polster. Also expressed in lateral head mesendoderm and in different asymmetric domains during development of the diencephalon, gut and heart. Strongly expressed during heart looping stages (30-36 hpf) and at 48 hpf. In the developing heart, exhibits left-sided asymmetric expression, with strongest expression in the anterior regions.</text>
</comment>
<comment type="induction">
    <molecule>Isoform c</molecule>
    <text evidence="6">Regulated by tgf-beta signaling in the early mesendoderm.</text>
</comment>
<comment type="similarity">
    <text evidence="10">Belongs to the paired homeobox family. Bicoid subfamily.</text>
</comment>
<gene>
    <name type="primary">pitx2</name>
    <name type="synonym">pitx2a</name>
    <name type="synonym">pitx2b</name>
    <name type="ORF">zgc:110508</name>
</gene>
<feature type="chain" id="PRO_0000049227" description="Pituitary homeobox 2">
    <location>
        <begin position="1"/>
        <end position="314"/>
    </location>
</feature>
<feature type="DNA-binding region" description="Homeobox" evidence="3">
    <location>
        <begin position="82"/>
        <end position="141"/>
    </location>
</feature>
<feature type="region of interest" description="Disordered" evidence="5">
    <location>
        <begin position="1"/>
        <end position="93"/>
    </location>
</feature>
<feature type="short sequence motif" description="OAR" evidence="4">
    <location>
        <begin position="276"/>
        <end position="289"/>
    </location>
</feature>
<feature type="short sequence motif" description="Nuclear localization signal" evidence="2">
    <location>
        <begin position="282"/>
        <end position="286"/>
    </location>
</feature>
<feature type="compositionally biased region" description="Basic residues" evidence="5">
    <location>
        <begin position="12"/>
        <end position="21"/>
    </location>
</feature>
<feature type="compositionally biased region" description="Polar residues" evidence="5">
    <location>
        <begin position="29"/>
        <end position="39"/>
    </location>
</feature>
<feature type="compositionally biased region" description="Basic and acidic residues" evidence="5">
    <location>
        <begin position="40"/>
        <end position="50"/>
    </location>
</feature>
<feature type="compositionally biased region" description="Basic and acidic residues" evidence="5">
    <location>
        <begin position="59"/>
        <end position="77"/>
    </location>
</feature>
<feature type="compositionally biased region" description="Basic residues" evidence="5">
    <location>
        <begin position="78"/>
        <end position="87"/>
    </location>
</feature>
<feature type="splice variant" id="VSP_002268" description="In isoform a." evidence="7 8 9">
    <location>
        <begin position="1"/>
        <end position="45"/>
    </location>
</feature>
<feature type="splice variant" id="VSP_002269" description="In isoform a." evidence="7 8 9">
    <original>LDVHTVSDTSSPESV</original>
    <variation>MDSHCRKLASTCAQL</variation>
    <location>
        <begin position="46"/>
        <end position="60"/>
    </location>
</feature>
<feature type="sequence conflict" description="In Ref. 4; AAH92922." evidence="10" ref="4">
    <original>A</original>
    <variation>T</variation>
    <location>
        <position position="25"/>
    </location>
</feature>
<keyword id="KW-0025">Alternative splicing</keyword>
<keyword id="KW-0963">Cytoplasm</keyword>
<keyword id="KW-0217">Developmental protein</keyword>
<keyword id="KW-0238">DNA-binding</keyword>
<keyword id="KW-0371">Homeobox</keyword>
<keyword id="KW-0539">Nucleus</keyword>
<keyword id="KW-1185">Reference proteome</keyword>
<proteinExistence type="evidence at transcript level"/>
<dbReference type="EMBL" id="AF156905">
    <property type="protein sequence ID" value="AAD40179.1"/>
    <property type="molecule type" value="mRNA"/>
</dbReference>
<dbReference type="EMBL" id="AF156906">
    <property type="protein sequence ID" value="AAD40180.1"/>
    <property type="molecule type" value="mRNA"/>
</dbReference>
<dbReference type="EMBL" id="AF181681">
    <property type="protein sequence ID" value="AAF00486.2"/>
    <property type="molecule type" value="mRNA"/>
</dbReference>
<dbReference type="EMBL" id="AF132446">
    <property type="protein sequence ID" value="AAD34390.1"/>
    <property type="molecule type" value="mRNA"/>
</dbReference>
<dbReference type="EMBL" id="AF132447">
    <property type="protein sequence ID" value="AAD34391.1"/>
    <property type="molecule type" value="mRNA"/>
</dbReference>
<dbReference type="EMBL" id="BC092922">
    <property type="protein sequence ID" value="AAH92922.1"/>
    <property type="molecule type" value="mRNA"/>
</dbReference>
<dbReference type="RefSeq" id="NP_571050.1">
    <molecule id="Q9W5Z2-1"/>
    <property type="nucleotide sequence ID" value="NM_130975.2"/>
</dbReference>
<dbReference type="RefSeq" id="XP_005157364.1">
    <molecule id="Q9W5Z2-2"/>
    <property type="nucleotide sequence ID" value="XM_005157307.5"/>
</dbReference>
<dbReference type="SMR" id="Q9W5Z2"/>
<dbReference type="FunCoup" id="Q9W5Z2">
    <property type="interactions" value="262"/>
</dbReference>
<dbReference type="STRING" id="7955.ENSDARP00000052568"/>
<dbReference type="PaxDb" id="7955-ENSDARP00000052568"/>
<dbReference type="Ensembl" id="ENSDART00000052569">
    <molecule id="Q9W5Z2-1"/>
    <property type="protein sequence ID" value="ENSDARP00000052568"/>
    <property type="gene ID" value="ENSDARG00000036194"/>
</dbReference>
<dbReference type="GeneID" id="30164"/>
<dbReference type="KEGG" id="dre:30164"/>
<dbReference type="AGR" id="ZFIN:ZDB-GENE-990714-27"/>
<dbReference type="CTD" id="5308"/>
<dbReference type="ZFIN" id="ZDB-GENE-990714-27">
    <property type="gene designation" value="pitx2"/>
</dbReference>
<dbReference type="eggNOG" id="KOG0486">
    <property type="taxonomic scope" value="Eukaryota"/>
</dbReference>
<dbReference type="HOGENOM" id="CLU_030301_0_0_1"/>
<dbReference type="InParanoid" id="Q9W5Z2"/>
<dbReference type="OMA" id="NSMRNPL"/>
<dbReference type="OrthoDB" id="6159439at2759"/>
<dbReference type="PhylomeDB" id="Q9W5Z2"/>
<dbReference type="TreeFam" id="TF351940"/>
<dbReference type="PRO" id="PR:Q9W5Z2"/>
<dbReference type="Proteomes" id="UP000000437">
    <property type="component" value="Chromosome 14"/>
</dbReference>
<dbReference type="Bgee" id="ENSDARG00000036194">
    <property type="expression patterns" value="Expressed in pharyngeal epithelium and 71 other cell types or tissues"/>
</dbReference>
<dbReference type="GO" id="GO:0005737">
    <property type="term" value="C:cytoplasm"/>
    <property type="evidence" value="ECO:0007669"/>
    <property type="project" value="UniProtKB-SubCell"/>
</dbReference>
<dbReference type="GO" id="GO:0005634">
    <property type="term" value="C:nucleus"/>
    <property type="evidence" value="ECO:0000318"/>
    <property type="project" value="GO_Central"/>
</dbReference>
<dbReference type="GO" id="GO:0000981">
    <property type="term" value="F:DNA-binding transcription factor activity, RNA polymerase II-specific"/>
    <property type="evidence" value="ECO:0000318"/>
    <property type="project" value="GO_Central"/>
</dbReference>
<dbReference type="GO" id="GO:0000978">
    <property type="term" value="F:RNA polymerase II cis-regulatory region sequence-specific DNA binding"/>
    <property type="evidence" value="ECO:0000318"/>
    <property type="project" value="GO_Central"/>
</dbReference>
<dbReference type="GO" id="GO:0009653">
    <property type="term" value="P:anatomical structure morphogenesis"/>
    <property type="evidence" value="ECO:0000318"/>
    <property type="project" value="GO_Central"/>
</dbReference>
<dbReference type="GO" id="GO:0043010">
    <property type="term" value="P:camera-type eye development"/>
    <property type="evidence" value="ECO:0000315"/>
    <property type="project" value="ZFIN"/>
</dbReference>
<dbReference type="GO" id="GO:0048593">
    <property type="term" value="P:camera-type eye morphogenesis"/>
    <property type="evidence" value="ECO:0000315"/>
    <property type="project" value="ZFIN"/>
</dbReference>
<dbReference type="GO" id="GO:0061386">
    <property type="term" value="P:closure of optic fissure"/>
    <property type="evidence" value="ECO:0000315"/>
    <property type="project" value="ZFIN"/>
</dbReference>
<dbReference type="GO" id="GO:0061303">
    <property type="term" value="P:cornea development in camera-type eye"/>
    <property type="evidence" value="ECO:0000315"/>
    <property type="project" value="ZFIN"/>
</dbReference>
<dbReference type="GO" id="GO:0071907">
    <property type="term" value="P:determination of digestive tract left/right asymmetry"/>
    <property type="evidence" value="ECO:0000314"/>
    <property type="project" value="ZFIN"/>
</dbReference>
<dbReference type="GO" id="GO:0035462">
    <property type="term" value="P:determination of left/right asymmetry in diencephalon"/>
    <property type="evidence" value="ECO:0000315"/>
    <property type="project" value="ZFIN"/>
</dbReference>
<dbReference type="GO" id="GO:0048596">
    <property type="term" value="P:embryonic camera-type eye morphogenesis"/>
    <property type="evidence" value="ECO:0000315"/>
    <property type="project" value="ZFIN"/>
</dbReference>
<dbReference type="GO" id="GO:0048701">
    <property type="term" value="P:embryonic cranial skeleton morphogenesis"/>
    <property type="evidence" value="ECO:0000315"/>
    <property type="project" value="ZFIN"/>
</dbReference>
<dbReference type="GO" id="GO:0060971">
    <property type="term" value="P:embryonic heart tube left/right pattern formation"/>
    <property type="evidence" value="ECO:0000314"/>
    <property type="project" value="ZFIN"/>
</dbReference>
<dbReference type="GO" id="GO:0048703">
    <property type="term" value="P:embryonic viscerocranium morphogenesis"/>
    <property type="evidence" value="ECO:0000315"/>
    <property type="project" value="ZFIN"/>
</dbReference>
<dbReference type="GO" id="GO:0021538">
    <property type="term" value="P:epithalamus development"/>
    <property type="evidence" value="ECO:0000315"/>
    <property type="project" value="ZFIN"/>
</dbReference>
<dbReference type="GO" id="GO:0060325">
    <property type="term" value="P:face morphogenesis"/>
    <property type="evidence" value="ECO:0000315"/>
    <property type="project" value="ZFIN"/>
</dbReference>
<dbReference type="GO" id="GO:0021986">
    <property type="term" value="P:habenula development"/>
    <property type="evidence" value="ECO:0000315"/>
    <property type="project" value="ZFIN"/>
</dbReference>
<dbReference type="GO" id="GO:0061072">
    <property type="term" value="P:iris morphogenesis"/>
    <property type="evidence" value="ECO:0000315"/>
    <property type="project" value="ZFIN"/>
</dbReference>
<dbReference type="GO" id="GO:0048382">
    <property type="term" value="P:mesendoderm development"/>
    <property type="evidence" value="ECO:0000314"/>
    <property type="project" value="ZFIN"/>
</dbReference>
<dbReference type="GO" id="GO:0042476">
    <property type="term" value="P:odontogenesis"/>
    <property type="evidence" value="ECO:0000315"/>
    <property type="project" value="ZFIN"/>
</dbReference>
<dbReference type="GO" id="GO:0021501">
    <property type="term" value="P:prechordal plate formation"/>
    <property type="evidence" value="ECO:0000316"/>
    <property type="project" value="ZFIN"/>
</dbReference>
<dbReference type="GO" id="GO:1904103">
    <property type="term" value="P:regulation of convergent extension involved in gastrulation"/>
    <property type="evidence" value="ECO:0000315"/>
    <property type="project" value="ZFIN"/>
</dbReference>
<dbReference type="GO" id="GO:0006357">
    <property type="term" value="P:regulation of transcription by RNA polymerase II"/>
    <property type="evidence" value="ECO:0000318"/>
    <property type="project" value="GO_Central"/>
</dbReference>
<dbReference type="GO" id="GO:0043114">
    <property type="term" value="P:regulation of vascular permeability"/>
    <property type="evidence" value="ECO:0000316"/>
    <property type="project" value="ZFIN"/>
</dbReference>
<dbReference type="GO" id="GO:0048384">
    <property type="term" value="P:retinoic acid receptor signaling pathway"/>
    <property type="evidence" value="ECO:0000315"/>
    <property type="project" value="ZFIN"/>
</dbReference>
<dbReference type="CDD" id="cd00086">
    <property type="entry name" value="homeodomain"/>
    <property type="match status" value="1"/>
</dbReference>
<dbReference type="FunFam" id="1.10.10.60:FF:000031">
    <property type="entry name" value="Homeobox protein"/>
    <property type="match status" value="1"/>
</dbReference>
<dbReference type="Gene3D" id="1.10.10.60">
    <property type="entry name" value="Homeodomain-like"/>
    <property type="match status" value="1"/>
</dbReference>
<dbReference type="InterPro" id="IPR001356">
    <property type="entry name" value="HD"/>
</dbReference>
<dbReference type="InterPro" id="IPR017970">
    <property type="entry name" value="Homeobox_CS"/>
</dbReference>
<dbReference type="InterPro" id="IPR016233">
    <property type="entry name" value="Homeobox_Pitx/unc30"/>
</dbReference>
<dbReference type="InterPro" id="IPR009057">
    <property type="entry name" value="Homeodomain-like_sf"/>
</dbReference>
<dbReference type="InterPro" id="IPR003654">
    <property type="entry name" value="OAR_dom"/>
</dbReference>
<dbReference type="PANTHER" id="PTHR45882:SF4">
    <property type="entry name" value="PITUITARY HOMEOBOX 2"/>
    <property type="match status" value="1"/>
</dbReference>
<dbReference type="PANTHER" id="PTHR45882">
    <property type="entry name" value="PITUITARY HOMEOBOX HOMOLOG PTX1"/>
    <property type="match status" value="1"/>
</dbReference>
<dbReference type="Pfam" id="PF00046">
    <property type="entry name" value="Homeodomain"/>
    <property type="match status" value="1"/>
</dbReference>
<dbReference type="Pfam" id="PF03826">
    <property type="entry name" value="OAR"/>
    <property type="match status" value="1"/>
</dbReference>
<dbReference type="PIRSF" id="PIRSF000563">
    <property type="entry name" value="Homeobox_protein_Pitx/Unc30"/>
    <property type="match status" value="1"/>
</dbReference>
<dbReference type="SMART" id="SM00389">
    <property type="entry name" value="HOX"/>
    <property type="match status" value="1"/>
</dbReference>
<dbReference type="SUPFAM" id="SSF46689">
    <property type="entry name" value="Homeodomain-like"/>
    <property type="match status" value="1"/>
</dbReference>
<dbReference type="PROSITE" id="PS00027">
    <property type="entry name" value="HOMEOBOX_1"/>
    <property type="match status" value="1"/>
</dbReference>
<dbReference type="PROSITE" id="PS50071">
    <property type="entry name" value="HOMEOBOX_2"/>
    <property type="match status" value="1"/>
</dbReference>
<dbReference type="PROSITE" id="PS50803">
    <property type="entry name" value="OAR"/>
    <property type="match status" value="1"/>
</dbReference>
<organism>
    <name type="scientific">Danio rerio</name>
    <name type="common">Zebrafish</name>
    <name type="synonym">Brachydanio rerio</name>
    <dbReference type="NCBI Taxonomy" id="7955"/>
    <lineage>
        <taxon>Eukaryota</taxon>
        <taxon>Metazoa</taxon>
        <taxon>Chordata</taxon>
        <taxon>Craniata</taxon>
        <taxon>Vertebrata</taxon>
        <taxon>Euteleostomi</taxon>
        <taxon>Actinopterygii</taxon>
        <taxon>Neopterygii</taxon>
        <taxon>Teleostei</taxon>
        <taxon>Ostariophysi</taxon>
        <taxon>Cypriniformes</taxon>
        <taxon>Danionidae</taxon>
        <taxon>Danioninae</taxon>
        <taxon>Danio</taxon>
    </lineage>
</organism>
<reference key="1">
    <citation type="journal article" date="1999" name="Genes Dev.">
        <title>Conserved requirement for EGF-CFC genes in vertebrate left-right axis formation.</title>
        <authorList>
            <person name="Yan Y.-T."/>
            <person name="Gritsman K."/>
            <person name="Ding J."/>
            <person name="Burdine R.D."/>
            <person name="Corrales J.D."/>
            <person name="Price S.M."/>
            <person name="Talbot W.S."/>
            <person name="Schier A.F."/>
            <person name="Shen M.M."/>
        </authorList>
    </citation>
    <scope>NUCLEOTIDE SEQUENCE [MRNA] (ISOFORMS A AND C)</scope>
</reference>
<reference key="2">
    <citation type="journal article" date="1999" name="Proc. Natl. Acad. Sci. U.S.A.">
        <title>Multiple left-right asymmetry defects in Shh(-/-) mutant mice unveil a convergence of the Shh and retinoic acid pathways in the control of Lefty-1.</title>
        <authorList>
            <person name="Tsukui T."/>
            <person name="Capdevila J."/>
            <person name="Tamura K."/>
            <person name="Ruiz-Lozano P."/>
            <person name="Rodriguez-Esteban C."/>
            <person name="Yonei-Tamura S."/>
            <person name="Magallon J."/>
            <person name="Chandraratna R.A.S."/>
            <person name="Chien K."/>
            <person name="Blumberg B."/>
            <person name="Evans R.M."/>
            <person name="Izpisua-Belmonte J.-C."/>
        </authorList>
    </citation>
    <scope>NUCLEOTIDE SEQUENCE [MRNA] (ISOFORM A)</scope>
    <source>
        <tissue>Embryo</tissue>
    </source>
</reference>
<reference key="3">
    <citation type="journal article" date="2000" name="Development">
        <title>Mesendoderm and left-right brain, heart and gut development are differentially regulated by pitx2 isoforms.</title>
        <authorList>
            <person name="Essner J.J."/>
            <person name="Branford W.W."/>
            <person name="Zhang J."/>
            <person name="Yost H.J."/>
        </authorList>
    </citation>
    <scope>NUCLEOTIDE SEQUENCE [MRNA] (ISOFORMS A AND C)</scope>
    <scope>FUNCTION</scope>
    <scope>DEVELOPMENTAL STAGE</scope>
    <scope>INDUCTION</scope>
    <source>
        <tissue>Embryo</tissue>
    </source>
</reference>
<reference key="4">
    <citation type="submission" date="2005-04" db="EMBL/GenBank/DDBJ databases">
        <authorList>
            <consortium name="NIH - Zebrafish Gene Collection (ZGC) project"/>
        </authorList>
    </citation>
    <scope>NUCLEOTIDE SEQUENCE [LARGE SCALE MRNA] (ISOFORM C)</scope>
    <source>
        <tissue>Embryo</tissue>
    </source>
</reference>
<accession>Q9W5Z2</accession>
<accession>Q568C4</accession>
<accession>Q9W5Z1</accession>
<protein>
    <recommendedName>
        <fullName>Pituitary homeobox 2</fullName>
    </recommendedName>
    <alternativeName>
        <fullName>Homeobox protein PITX2</fullName>
    </alternativeName>
    <alternativeName>
        <fullName>Paired-like homeodomain transcription factor 2</fullName>
    </alternativeName>
</protein>
<name>PITX2_DANRE</name>
<sequence>MTSMKDPLSLDHHHHNHHVTGSKHAPLSMASSLQPLQRSVDSKHRLDVHTVSDTSSPESVEKEKGQSKNEDSNDDPSKKKRQRRQRTHFTSQQLQELEATFQRNRYPDMSTREEIAVWTNLTEARVRVWFKNRRAKWRKRERNQQAELCKNGFGPQFNGLMQPYDDMYPSYTYNNWAAKGLTSASLSTKSFPFFNSMNVNPLSSQTMFSPPNSISSMSMSSSMVPSAVTGVPGSSLNSLNNLNNLSNPSLNSGVPTPACPYAPPTPPYVYRDTCNSSLASLRLKAKQHSSFGYASVQNPASNLSACQYAVDRPV</sequence>
<evidence type="ECO:0000250" key="1">
    <source>
        <dbReference type="UniProtKB" id="P97474"/>
    </source>
</evidence>
<evidence type="ECO:0000255" key="2"/>
<evidence type="ECO:0000255" key="3">
    <source>
        <dbReference type="PROSITE-ProRule" id="PRU00108"/>
    </source>
</evidence>
<evidence type="ECO:0000255" key="4">
    <source>
        <dbReference type="PROSITE-ProRule" id="PRU00138"/>
    </source>
</evidence>
<evidence type="ECO:0000256" key="5">
    <source>
        <dbReference type="SAM" id="MobiDB-lite"/>
    </source>
</evidence>
<evidence type="ECO:0000269" key="6">
    <source>
    </source>
</evidence>
<evidence type="ECO:0000303" key="7">
    <source>
    </source>
</evidence>
<evidence type="ECO:0000303" key="8">
    <source>
    </source>
</evidence>
<evidence type="ECO:0000303" key="9">
    <source>
    </source>
</evidence>
<evidence type="ECO:0000305" key="10"/>